<feature type="chain" id="PRO_0000272743" description="Large ribosomal subunit protein uL23">
    <location>
        <begin position="1"/>
        <end position="100"/>
    </location>
</feature>
<protein>
    <recommendedName>
        <fullName evidence="1">Large ribosomal subunit protein uL23</fullName>
    </recommendedName>
    <alternativeName>
        <fullName evidence="2">50S ribosomal protein L23</fullName>
    </alternativeName>
</protein>
<comment type="function">
    <text evidence="1">One of the early assembly proteins it binds 23S rRNA. One of the proteins that surrounds the polypeptide exit tunnel on the outside of the ribosome. Forms the main docking site for trigger factor binding to the ribosome.</text>
</comment>
<comment type="subunit">
    <text evidence="1">Part of the 50S ribosomal subunit. Contacts protein L29, and trigger factor when it is bound to the ribosome.</text>
</comment>
<comment type="similarity">
    <text evidence="1">Belongs to the universal ribosomal protein uL23 family.</text>
</comment>
<dbReference type="EMBL" id="BX950851">
    <property type="protein sequence ID" value="CAG76926.1"/>
    <property type="molecule type" value="Genomic_DNA"/>
</dbReference>
<dbReference type="RefSeq" id="WP_011095509.1">
    <property type="nucleotide sequence ID" value="NC_004547.2"/>
</dbReference>
<dbReference type="SMR" id="Q6CZX2"/>
<dbReference type="STRING" id="218491.ECA4029"/>
<dbReference type="GeneID" id="57210693"/>
<dbReference type="KEGG" id="eca:ECA4029"/>
<dbReference type="PATRIC" id="fig|218491.5.peg.4095"/>
<dbReference type="eggNOG" id="COG0089">
    <property type="taxonomic scope" value="Bacteria"/>
</dbReference>
<dbReference type="HOGENOM" id="CLU_037562_3_1_6"/>
<dbReference type="OrthoDB" id="9793353at2"/>
<dbReference type="Proteomes" id="UP000007966">
    <property type="component" value="Chromosome"/>
</dbReference>
<dbReference type="GO" id="GO:1990904">
    <property type="term" value="C:ribonucleoprotein complex"/>
    <property type="evidence" value="ECO:0007669"/>
    <property type="project" value="UniProtKB-KW"/>
</dbReference>
<dbReference type="GO" id="GO:0005840">
    <property type="term" value="C:ribosome"/>
    <property type="evidence" value="ECO:0007669"/>
    <property type="project" value="UniProtKB-KW"/>
</dbReference>
<dbReference type="GO" id="GO:0019843">
    <property type="term" value="F:rRNA binding"/>
    <property type="evidence" value="ECO:0007669"/>
    <property type="project" value="UniProtKB-UniRule"/>
</dbReference>
<dbReference type="GO" id="GO:0003735">
    <property type="term" value="F:structural constituent of ribosome"/>
    <property type="evidence" value="ECO:0007669"/>
    <property type="project" value="InterPro"/>
</dbReference>
<dbReference type="GO" id="GO:0006412">
    <property type="term" value="P:translation"/>
    <property type="evidence" value="ECO:0007669"/>
    <property type="project" value="UniProtKB-UniRule"/>
</dbReference>
<dbReference type="FunFam" id="3.30.70.330:FF:000001">
    <property type="entry name" value="50S ribosomal protein L23"/>
    <property type="match status" value="1"/>
</dbReference>
<dbReference type="Gene3D" id="3.30.70.330">
    <property type="match status" value="1"/>
</dbReference>
<dbReference type="HAMAP" id="MF_01369_B">
    <property type="entry name" value="Ribosomal_uL23_B"/>
    <property type="match status" value="1"/>
</dbReference>
<dbReference type="InterPro" id="IPR012677">
    <property type="entry name" value="Nucleotide-bd_a/b_plait_sf"/>
</dbReference>
<dbReference type="InterPro" id="IPR013025">
    <property type="entry name" value="Ribosomal_uL23-like"/>
</dbReference>
<dbReference type="InterPro" id="IPR012678">
    <property type="entry name" value="Ribosomal_uL23/eL15/eS24_sf"/>
</dbReference>
<dbReference type="InterPro" id="IPR001014">
    <property type="entry name" value="Ribosomal_uL23_CS"/>
</dbReference>
<dbReference type="NCBIfam" id="NF004358">
    <property type="entry name" value="PRK05738.1-1"/>
    <property type="match status" value="1"/>
</dbReference>
<dbReference type="NCBIfam" id="NF004359">
    <property type="entry name" value="PRK05738.1-3"/>
    <property type="match status" value="1"/>
</dbReference>
<dbReference type="NCBIfam" id="NF004363">
    <property type="entry name" value="PRK05738.2-4"/>
    <property type="match status" value="1"/>
</dbReference>
<dbReference type="NCBIfam" id="NF004366">
    <property type="entry name" value="PRK05738.3-2"/>
    <property type="match status" value="1"/>
</dbReference>
<dbReference type="PANTHER" id="PTHR11620">
    <property type="entry name" value="60S RIBOSOMAL PROTEIN L23A"/>
    <property type="match status" value="1"/>
</dbReference>
<dbReference type="Pfam" id="PF00276">
    <property type="entry name" value="Ribosomal_L23"/>
    <property type="match status" value="1"/>
</dbReference>
<dbReference type="SUPFAM" id="SSF54189">
    <property type="entry name" value="Ribosomal proteins S24e, L23 and L15e"/>
    <property type="match status" value="1"/>
</dbReference>
<dbReference type="PROSITE" id="PS00050">
    <property type="entry name" value="RIBOSOMAL_L23"/>
    <property type="match status" value="1"/>
</dbReference>
<accession>Q6CZX2</accession>
<keyword id="KW-1185">Reference proteome</keyword>
<keyword id="KW-0687">Ribonucleoprotein</keyword>
<keyword id="KW-0689">Ribosomal protein</keyword>
<keyword id="KW-0694">RNA-binding</keyword>
<keyword id="KW-0699">rRNA-binding</keyword>
<gene>
    <name evidence="1" type="primary">rplW</name>
    <name type="ordered locus">ECA4029</name>
</gene>
<sequence length="100" mass="11171">MIREERLLKVLRAPHVSEKASAAMEKSNTIVLKVAKDATKAEIKAAVQKLFEVEVEVVNTLVVKGKTKRHGQRIGRRSDWKKAYVTLKEGQNLDFVGGAE</sequence>
<proteinExistence type="inferred from homology"/>
<organism>
    <name type="scientific">Pectobacterium atrosepticum (strain SCRI 1043 / ATCC BAA-672)</name>
    <name type="common">Erwinia carotovora subsp. atroseptica</name>
    <dbReference type="NCBI Taxonomy" id="218491"/>
    <lineage>
        <taxon>Bacteria</taxon>
        <taxon>Pseudomonadati</taxon>
        <taxon>Pseudomonadota</taxon>
        <taxon>Gammaproteobacteria</taxon>
        <taxon>Enterobacterales</taxon>
        <taxon>Pectobacteriaceae</taxon>
        <taxon>Pectobacterium</taxon>
    </lineage>
</organism>
<name>RL23_PECAS</name>
<evidence type="ECO:0000255" key="1">
    <source>
        <dbReference type="HAMAP-Rule" id="MF_01369"/>
    </source>
</evidence>
<evidence type="ECO:0000305" key="2"/>
<reference key="1">
    <citation type="journal article" date="2004" name="Proc. Natl. Acad. Sci. U.S.A.">
        <title>Genome sequence of the enterobacterial phytopathogen Erwinia carotovora subsp. atroseptica and characterization of virulence factors.</title>
        <authorList>
            <person name="Bell K.S."/>
            <person name="Sebaihia M."/>
            <person name="Pritchard L."/>
            <person name="Holden M.T.G."/>
            <person name="Hyman L.J."/>
            <person name="Holeva M.C."/>
            <person name="Thomson N.R."/>
            <person name="Bentley S.D."/>
            <person name="Churcher L.J.C."/>
            <person name="Mungall K."/>
            <person name="Atkin R."/>
            <person name="Bason N."/>
            <person name="Brooks K."/>
            <person name="Chillingworth T."/>
            <person name="Clark K."/>
            <person name="Doggett J."/>
            <person name="Fraser A."/>
            <person name="Hance Z."/>
            <person name="Hauser H."/>
            <person name="Jagels K."/>
            <person name="Moule S."/>
            <person name="Norbertczak H."/>
            <person name="Ormond D."/>
            <person name="Price C."/>
            <person name="Quail M.A."/>
            <person name="Sanders M."/>
            <person name="Walker D."/>
            <person name="Whitehead S."/>
            <person name="Salmond G.P.C."/>
            <person name="Birch P.R.J."/>
            <person name="Parkhill J."/>
            <person name="Toth I.K."/>
        </authorList>
    </citation>
    <scope>NUCLEOTIDE SEQUENCE [LARGE SCALE GENOMIC DNA]</scope>
    <source>
        <strain>SCRI 1043 / ATCC BAA-672</strain>
    </source>
</reference>